<dbReference type="EC" id="1.3.5.1"/>
<dbReference type="EMBL" id="L27705">
    <property type="protein sequence ID" value="AAA61925.1"/>
    <property type="molecule type" value="Genomic_DNA"/>
</dbReference>
<dbReference type="EMBL" id="AE013599">
    <property type="protein sequence ID" value="AAF57396.1"/>
    <property type="molecule type" value="Genomic_DNA"/>
</dbReference>
<dbReference type="EMBL" id="AY118923">
    <property type="protein sequence ID" value="AAM50783.1"/>
    <property type="molecule type" value="mRNA"/>
</dbReference>
<dbReference type="RefSeq" id="NP_477101.1">
    <property type="nucleotide sequence ID" value="NM_057753.5"/>
</dbReference>
<dbReference type="SMR" id="P21914"/>
<dbReference type="BioGRID" id="61486">
    <property type="interactions" value="17"/>
</dbReference>
<dbReference type="ComplexPortal" id="CPX-8622">
    <property type="entry name" value="Mitochondrial respiratory chain complex II"/>
</dbReference>
<dbReference type="DIP" id="DIP-20115N"/>
<dbReference type="FunCoup" id="P21914">
    <property type="interactions" value="1497"/>
</dbReference>
<dbReference type="IntAct" id="P21914">
    <property type="interactions" value="9"/>
</dbReference>
<dbReference type="STRING" id="7227.FBpp0085489"/>
<dbReference type="PaxDb" id="7227-FBpp0085489"/>
<dbReference type="DNASU" id="35590"/>
<dbReference type="EnsemblMetazoa" id="FBtr0086156">
    <property type="protein sequence ID" value="FBpp0085489"/>
    <property type="gene ID" value="FBgn0014028"/>
</dbReference>
<dbReference type="GeneID" id="35590"/>
<dbReference type="KEGG" id="dme:Dmel_CG3283"/>
<dbReference type="AGR" id="FB:FBgn0014028"/>
<dbReference type="CTD" id="6390"/>
<dbReference type="FlyBase" id="FBgn0014028">
    <property type="gene designation" value="SdhB"/>
</dbReference>
<dbReference type="VEuPathDB" id="VectorBase:FBgn0014028"/>
<dbReference type="eggNOG" id="KOG3049">
    <property type="taxonomic scope" value="Eukaryota"/>
</dbReference>
<dbReference type="GeneTree" id="ENSGT00390000013558"/>
<dbReference type="HOGENOM" id="CLU_044838_0_2_1"/>
<dbReference type="InParanoid" id="P21914"/>
<dbReference type="OMA" id="DGQYFGP"/>
<dbReference type="OrthoDB" id="1696654at2759"/>
<dbReference type="PhylomeDB" id="P21914"/>
<dbReference type="Reactome" id="R-DME-71403">
    <property type="pathway name" value="Citric acid cycle (TCA cycle)"/>
</dbReference>
<dbReference type="UniPathway" id="UPA00223">
    <property type="reaction ID" value="UER01006"/>
</dbReference>
<dbReference type="BioGRID-ORCS" id="35590">
    <property type="hits" value="0 hits in 3 CRISPR screens"/>
</dbReference>
<dbReference type="GenomeRNAi" id="35590"/>
<dbReference type="PRO" id="PR:P21914"/>
<dbReference type="Proteomes" id="UP000000803">
    <property type="component" value="Chromosome 2R"/>
</dbReference>
<dbReference type="Bgee" id="FBgn0014028">
    <property type="expression patterns" value="Expressed in second segment of antenna (Drosophila) and 251 other cell types or tissues"/>
</dbReference>
<dbReference type="GO" id="GO:0005743">
    <property type="term" value="C:mitochondrial inner membrane"/>
    <property type="evidence" value="ECO:0000250"/>
    <property type="project" value="UniProtKB"/>
</dbReference>
<dbReference type="GO" id="GO:0031966">
    <property type="term" value="C:mitochondrial membrane"/>
    <property type="evidence" value="ECO:0000318"/>
    <property type="project" value="GO_Central"/>
</dbReference>
<dbReference type="GO" id="GO:0045273">
    <property type="term" value="C:respiratory chain complex II (succinate dehydrogenase)"/>
    <property type="evidence" value="ECO:0000250"/>
    <property type="project" value="UniProtKB"/>
</dbReference>
<dbReference type="GO" id="GO:0051537">
    <property type="term" value="F:2 iron, 2 sulfur cluster binding"/>
    <property type="evidence" value="ECO:0000250"/>
    <property type="project" value="UniProtKB"/>
</dbReference>
<dbReference type="GO" id="GO:0051538">
    <property type="term" value="F:3 iron, 4 sulfur cluster binding"/>
    <property type="evidence" value="ECO:0000250"/>
    <property type="project" value="UniProtKB"/>
</dbReference>
<dbReference type="GO" id="GO:0051539">
    <property type="term" value="F:4 iron, 4 sulfur cluster binding"/>
    <property type="evidence" value="ECO:0000250"/>
    <property type="project" value="UniProtKB"/>
</dbReference>
<dbReference type="GO" id="GO:0009055">
    <property type="term" value="F:electron transfer activity"/>
    <property type="evidence" value="ECO:0007669"/>
    <property type="project" value="InterPro"/>
</dbReference>
<dbReference type="GO" id="GO:0046872">
    <property type="term" value="F:metal ion binding"/>
    <property type="evidence" value="ECO:0007669"/>
    <property type="project" value="UniProtKB-KW"/>
</dbReference>
<dbReference type="GO" id="GO:0008177">
    <property type="term" value="F:succinate dehydrogenase (quinone) activity"/>
    <property type="evidence" value="ECO:0000250"/>
    <property type="project" value="FlyBase"/>
</dbReference>
<dbReference type="GO" id="GO:0048039">
    <property type="term" value="F:ubiquinone binding"/>
    <property type="evidence" value="ECO:0000250"/>
    <property type="project" value="UniProtKB"/>
</dbReference>
<dbReference type="GO" id="GO:0009060">
    <property type="term" value="P:aerobic respiration"/>
    <property type="evidence" value="ECO:0000318"/>
    <property type="project" value="GO_Central"/>
</dbReference>
<dbReference type="GO" id="GO:0006121">
    <property type="term" value="P:mitochondrial electron transport, succinate to ubiquinone"/>
    <property type="evidence" value="ECO:0000314"/>
    <property type="project" value="FlyBase"/>
</dbReference>
<dbReference type="GO" id="GO:0022904">
    <property type="term" value="P:respiratory electron transport chain"/>
    <property type="evidence" value="ECO:0000318"/>
    <property type="project" value="GO_Central"/>
</dbReference>
<dbReference type="GO" id="GO:0006099">
    <property type="term" value="P:tricarboxylic acid cycle"/>
    <property type="evidence" value="ECO:0007669"/>
    <property type="project" value="UniProtKB-UniPathway"/>
</dbReference>
<dbReference type="CDD" id="cd00207">
    <property type="entry name" value="fer2"/>
    <property type="match status" value="1"/>
</dbReference>
<dbReference type="FunFam" id="1.10.1060.10:FF:000029">
    <property type="entry name" value="Succinate dehydrogenase [ubiquinone] iron-sulfur subunit, mitochondrial"/>
    <property type="match status" value="1"/>
</dbReference>
<dbReference type="FunFam" id="3.10.20.30:FF:000007">
    <property type="entry name" value="Succinate dehydrogenase [ubiquinone] iron-sulfur subunit, mitochondrial"/>
    <property type="match status" value="1"/>
</dbReference>
<dbReference type="Gene3D" id="3.10.20.30">
    <property type="match status" value="1"/>
</dbReference>
<dbReference type="Gene3D" id="1.10.1060.10">
    <property type="entry name" value="Alpha-helical ferredoxin"/>
    <property type="match status" value="1"/>
</dbReference>
<dbReference type="InterPro" id="IPR036010">
    <property type="entry name" value="2Fe-2S_ferredoxin-like_sf"/>
</dbReference>
<dbReference type="InterPro" id="IPR001041">
    <property type="entry name" value="2Fe-2S_ferredoxin-type"/>
</dbReference>
<dbReference type="InterPro" id="IPR006058">
    <property type="entry name" value="2Fe2S_fd_BS"/>
</dbReference>
<dbReference type="InterPro" id="IPR017896">
    <property type="entry name" value="4Fe4S_Fe-S-bd"/>
</dbReference>
<dbReference type="InterPro" id="IPR017900">
    <property type="entry name" value="4Fe4S_Fe_S_CS"/>
</dbReference>
<dbReference type="InterPro" id="IPR012675">
    <property type="entry name" value="Beta-grasp_dom_sf"/>
</dbReference>
<dbReference type="InterPro" id="IPR009051">
    <property type="entry name" value="Helical_ferredxn"/>
</dbReference>
<dbReference type="InterPro" id="IPR050573">
    <property type="entry name" value="SDH/FRD_Iron-Sulfur"/>
</dbReference>
<dbReference type="InterPro" id="IPR004489">
    <property type="entry name" value="Succ_DH/fum_Rdtase_Fe-S"/>
</dbReference>
<dbReference type="InterPro" id="IPR025192">
    <property type="entry name" value="Succ_DH/fum_Rdtase_N"/>
</dbReference>
<dbReference type="NCBIfam" id="TIGR00384">
    <property type="entry name" value="dhsB"/>
    <property type="match status" value="1"/>
</dbReference>
<dbReference type="NCBIfam" id="NF004616">
    <property type="entry name" value="PRK05950.1"/>
    <property type="match status" value="1"/>
</dbReference>
<dbReference type="PANTHER" id="PTHR11921:SF29">
    <property type="entry name" value="SUCCINATE DEHYDROGENASE [UBIQUINONE] IRON-SULFUR SUBUNIT, MITOCHONDRIAL"/>
    <property type="match status" value="1"/>
</dbReference>
<dbReference type="PANTHER" id="PTHR11921">
    <property type="entry name" value="SUCCINATE DEHYDROGENASE IRON-SULFUR PROTEIN"/>
    <property type="match status" value="1"/>
</dbReference>
<dbReference type="Pfam" id="PF13085">
    <property type="entry name" value="Fer2_3"/>
    <property type="match status" value="1"/>
</dbReference>
<dbReference type="Pfam" id="PF13534">
    <property type="entry name" value="Fer4_17"/>
    <property type="match status" value="1"/>
</dbReference>
<dbReference type="SUPFAM" id="SSF54292">
    <property type="entry name" value="2Fe-2S ferredoxin-like"/>
    <property type="match status" value="1"/>
</dbReference>
<dbReference type="SUPFAM" id="SSF46548">
    <property type="entry name" value="alpha-helical ferredoxin"/>
    <property type="match status" value="1"/>
</dbReference>
<dbReference type="PROSITE" id="PS00197">
    <property type="entry name" value="2FE2S_FER_1"/>
    <property type="match status" value="1"/>
</dbReference>
<dbReference type="PROSITE" id="PS51085">
    <property type="entry name" value="2FE2S_FER_2"/>
    <property type="match status" value="1"/>
</dbReference>
<dbReference type="PROSITE" id="PS00198">
    <property type="entry name" value="4FE4S_FER_1"/>
    <property type="match status" value="1"/>
</dbReference>
<dbReference type="PROSITE" id="PS51379">
    <property type="entry name" value="4FE4S_FER_2"/>
    <property type="match status" value="1"/>
</dbReference>
<comment type="function">
    <text evidence="1">Iron-sulfur protein (IP) subunit of succinate dehydrogenase (SDH) that is involved in complex II of the mitochondrial electron transport chain and is responsible for transferring electrons from succinate to ubiquinone (coenzyme Q).</text>
</comment>
<comment type="catalytic activity">
    <reaction>
        <text>a quinone + succinate = fumarate + a quinol</text>
        <dbReference type="Rhea" id="RHEA:40523"/>
        <dbReference type="ChEBI" id="CHEBI:24646"/>
        <dbReference type="ChEBI" id="CHEBI:29806"/>
        <dbReference type="ChEBI" id="CHEBI:30031"/>
        <dbReference type="ChEBI" id="CHEBI:132124"/>
        <dbReference type="EC" id="1.3.5.1"/>
    </reaction>
</comment>
<comment type="cofactor">
    <cofactor evidence="1">
        <name>[2Fe-2S] cluster</name>
        <dbReference type="ChEBI" id="CHEBI:190135"/>
    </cofactor>
    <text evidence="1">Binds 1 [2Fe-2S] cluster.</text>
</comment>
<comment type="cofactor">
    <cofactor evidence="1">
        <name>[3Fe-4S] cluster</name>
        <dbReference type="ChEBI" id="CHEBI:21137"/>
    </cofactor>
    <text evidence="1">Binds 1 [3Fe-4S] cluster.</text>
</comment>
<comment type="cofactor">
    <cofactor evidence="1">
        <name>[4Fe-4S] cluster</name>
        <dbReference type="ChEBI" id="CHEBI:49883"/>
    </cofactor>
    <text evidence="1">Binds 1 [4Fe-4S] cluster.</text>
</comment>
<comment type="pathway">
    <text>Carbohydrate metabolism; tricarboxylic acid cycle; fumarate from succinate (eukaryal route): step 1/1.</text>
</comment>
<comment type="subunit">
    <text evidence="1">Component of complex II composed of four subunits: a flavoprotein (FP), an iron-sulfur protein (IP), and a cytochrome b composed of a large and a small subunit.</text>
</comment>
<comment type="subcellular location">
    <subcellularLocation>
        <location evidence="1">Mitochondrion inner membrane</location>
        <topology evidence="1">Peripheral membrane protein</topology>
        <orientation evidence="1">Matrix side</orientation>
    </subcellularLocation>
</comment>
<comment type="tissue specificity">
    <text evidence="5">Most abundant in the adult thorax and low in abdominal tissues.</text>
</comment>
<comment type="developmental stage">
    <text evidence="5">Expressed throughout development; pupae have very low levels of expression, in contrast to larvae.</text>
</comment>
<comment type="similarity">
    <text evidence="6">Belongs to the succinate dehydrogenase/fumarate reductase iron-sulfur protein family.</text>
</comment>
<organism>
    <name type="scientific">Drosophila melanogaster</name>
    <name type="common">Fruit fly</name>
    <dbReference type="NCBI Taxonomy" id="7227"/>
    <lineage>
        <taxon>Eukaryota</taxon>
        <taxon>Metazoa</taxon>
        <taxon>Ecdysozoa</taxon>
        <taxon>Arthropoda</taxon>
        <taxon>Hexapoda</taxon>
        <taxon>Insecta</taxon>
        <taxon>Pterygota</taxon>
        <taxon>Neoptera</taxon>
        <taxon>Endopterygota</taxon>
        <taxon>Diptera</taxon>
        <taxon>Brachycera</taxon>
        <taxon>Muscomorpha</taxon>
        <taxon>Ephydroidea</taxon>
        <taxon>Drosophilidae</taxon>
        <taxon>Drosophila</taxon>
        <taxon>Sophophora</taxon>
    </lineage>
</organism>
<proteinExistence type="evidence at transcript level"/>
<gene>
    <name type="primary">SdhB</name>
    <name type="synonym">SDH</name>
    <name type="ORF">CG3283</name>
</gene>
<accession>P21914</accession>
<accession>Q9V9A0</accession>
<name>SDHB_DROME</name>
<sequence>MLATEARQILSRVGSLVARNQMRAISNGTAQLEQQAQPKEAQEPQIKKFEIYRWNPDNAGEKPYMQTYEVDLRECGPMVLDALIKIKNEMDPTLTFRRSCREGICGSCAMNIGGTNTLACISKIDINTSKSLKVYPLPHMYVVRDLVPDMNNFYEQYRNIQPWLQRKNEAGEKKGKAQYLQSVEDRSKLDGLYECILCACCSTSCPSYWWNAEKYLGPAVLMQAYRWIIDSRDENSAERLNKLKDPFSVYRCHTIMNCTRTCPKGLNPGRAIAEIKKLLSGLASKPAPKLETAALHK</sequence>
<reference key="1">
    <citation type="journal article" date="1994" name="Gene">
        <title>Characterization of the gene encoding the iron-sulfur protein subunit of succinate dehydrogenase from Drosophila melanogaster.</title>
        <authorList>
            <person name="Au H.C."/>
            <person name="Scheffler I.E."/>
        </authorList>
    </citation>
    <scope>NUCLEOTIDE SEQUENCE [GENOMIC DNA]</scope>
    <scope>TISSUE SPECIFICITY</scope>
    <scope>DEVELOPMENTAL STAGE</scope>
</reference>
<reference key="2">
    <citation type="journal article" date="2000" name="Science">
        <title>The genome sequence of Drosophila melanogaster.</title>
        <authorList>
            <person name="Adams M.D."/>
            <person name="Celniker S.E."/>
            <person name="Holt R.A."/>
            <person name="Evans C.A."/>
            <person name="Gocayne J.D."/>
            <person name="Amanatides P.G."/>
            <person name="Scherer S.E."/>
            <person name="Li P.W."/>
            <person name="Hoskins R.A."/>
            <person name="Galle R.F."/>
            <person name="George R.A."/>
            <person name="Lewis S.E."/>
            <person name="Richards S."/>
            <person name="Ashburner M."/>
            <person name="Henderson S.N."/>
            <person name="Sutton G.G."/>
            <person name="Wortman J.R."/>
            <person name="Yandell M.D."/>
            <person name="Zhang Q."/>
            <person name="Chen L.X."/>
            <person name="Brandon R.C."/>
            <person name="Rogers Y.-H.C."/>
            <person name="Blazej R.G."/>
            <person name="Champe M."/>
            <person name="Pfeiffer B.D."/>
            <person name="Wan K.H."/>
            <person name="Doyle C."/>
            <person name="Baxter E.G."/>
            <person name="Helt G."/>
            <person name="Nelson C.R."/>
            <person name="Miklos G.L.G."/>
            <person name="Abril J.F."/>
            <person name="Agbayani A."/>
            <person name="An H.-J."/>
            <person name="Andrews-Pfannkoch C."/>
            <person name="Baldwin D."/>
            <person name="Ballew R.M."/>
            <person name="Basu A."/>
            <person name="Baxendale J."/>
            <person name="Bayraktaroglu L."/>
            <person name="Beasley E.M."/>
            <person name="Beeson K.Y."/>
            <person name="Benos P.V."/>
            <person name="Berman B.P."/>
            <person name="Bhandari D."/>
            <person name="Bolshakov S."/>
            <person name="Borkova D."/>
            <person name="Botchan M.R."/>
            <person name="Bouck J."/>
            <person name="Brokstein P."/>
            <person name="Brottier P."/>
            <person name="Burtis K.C."/>
            <person name="Busam D.A."/>
            <person name="Butler H."/>
            <person name="Cadieu E."/>
            <person name="Center A."/>
            <person name="Chandra I."/>
            <person name="Cherry J.M."/>
            <person name="Cawley S."/>
            <person name="Dahlke C."/>
            <person name="Davenport L.B."/>
            <person name="Davies P."/>
            <person name="de Pablos B."/>
            <person name="Delcher A."/>
            <person name="Deng Z."/>
            <person name="Mays A.D."/>
            <person name="Dew I."/>
            <person name="Dietz S.M."/>
            <person name="Dodson K."/>
            <person name="Doup L.E."/>
            <person name="Downes M."/>
            <person name="Dugan-Rocha S."/>
            <person name="Dunkov B.C."/>
            <person name="Dunn P."/>
            <person name="Durbin K.J."/>
            <person name="Evangelista C.C."/>
            <person name="Ferraz C."/>
            <person name="Ferriera S."/>
            <person name="Fleischmann W."/>
            <person name="Fosler C."/>
            <person name="Gabrielian A.E."/>
            <person name="Garg N.S."/>
            <person name="Gelbart W.M."/>
            <person name="Glasser K."/>
            <person name="Glodek A."/>
            <person name="Gong F."/>
            <person name="Gorrell J.H."/>
            <person name="Gu Z."/>
            <person name="Guan P."/>
            <person name="Harris M."/>
            <person name="Harris N.L."/>
            <person name="Harvey D.A."/>
            <person name="Heiman T.J."/>
            <person name="Hernandez J.R."/>
            <person name="Houck J."/>
            <person name="Hostin D."/>
            <person name="Houston K.A."/>
            <person name="Howland T.J."/>
            <person name="Wei M.-H."/>
            <person name="Ibegwam C."/>
            <person name="Jalali M."/>
            <person name="Kalush F."/>
            <person name="Karpen G.H."/>
            <person name="Ke Z."/>
            <person name="Kennison J.A."/>
            <person name="Ketchum K.A."/>
            <person name="Kimmel B.E."/>
            <person name="Kodira C.D."/>
            <person name="Kraft C.L."/>
            <person name="Kravitz S."/>
            <person name="Kulp D."/>
            <person name="Lai Z."/>
            <person name="Lasko P."/>
            <person name="Lei Y."/>
            <person name="Levitsky A.A."/>
            <person name="Li J.H."/>
            <person name="Li Z."/>
            <person name="Liang Y."/>
            <person name="Lin X."/>
            <person name="Liu X."/>
            <person name="Mattei B."/>
            <person name="McIntosh T.C."/>
            <person name="McLeod M.P."/>
            <person name="McPherson D."/>
            <person name="Merkulov G."/>
            <person name="Milshina N.V."/>
            <person name="Mobarry C."/>
            <person name="Morris J."/>
            <person name="Moshrefi A."/>
            <person name="Mount S.M."/>
            <person name="Moy M."/>
            <person name="Murphy B."/>
            <person name="Murphy L."/>
            <person name="Muzny D.M."/>
            <person name="Nelson D.L."/>
            <person name="Nelson D.R."/>
            <person name="Nelson K.A."/>
            <person name="Nixon K."/>
            <person name="Nusskern D.R."/>
            <person name="Pacleb J.M."/>
            <person name="Palazzolo M."/>
            <person name="Pittman G.S."/>
            <person name="Pan S."/>
            <person name="Pollard J."/>
            <person name="Puri V."/>
            <person name="Reese M.G."/>
            <person name="Reinert K."/>
            <person name="Remington K."/>
            <person name="Saunders R.D.C."/>
            <person name="Scheeler F."/>
            <person name="Shen H."/>
            <person name="Shue B.C."/>
            <person name="Siden-Kiamos I."/>
            <person name="Simpson M."/>
            <person name="Skupski M.P."/>
            <person name="Smith T.J."/>
            <person name="Spier E."/>
            <person name="Spradling A.C."/>
            <person name="Stapleton M."/>
            <person name="Strong R."/>
            <person name="Sun E."/>
            <person name="Svirskas R."/>
            <person name="Tector C."/>
            <person name="Turner R."/>
            <person name="Venter E."/>
            <person name="Wang A.H."/>
            <person name="Wang X."/>
            <person name="Wang Z.-Y."/>
            <person name="Wassarman D.A."/>
            <person name="Weinstock G.M."/>
            <person name="Weissenbach J."/>
            <person name="Williams S.M."/>
            <person name="Woodage T."/>
            <person name="Worley K.C."/>
            <person name="Wu D."/>
            <person name="Yang S."/>
            <person name="Yao Q.A."/>
            <person name="Ye J."/>
            <person name="Yeh R.-F."/>
            <person name="Zaveri J.S."/>
            <person name="Zhan M."/>
            <person name="Zhang G."/>
            <person name="Zhao Q."/>
            <person name="Zheng L."/>
            <person name="Zheng X.H."/>
            <person name="Zhong F.N."/>
            <person name="Zhong W."/>
            <person name="Zhou X."/>
            <person name="Zhu S.C."/>
            <person name="Zhu X."/>
            <person name="Smith H.O."/>
            <person name="Gibbs R.A."/>
            <person name="Myers E.W."/>
            <person name="Rubin G.M."/>
            <person name="Venter J.C."/>
        </authorList>
    </citation>
    <scope>NUCLEOTIDE SEQUENCE [LARGE SCALE GENOMIC DNA]</scope>
    <source>
        <strain>Berkeley</strain>
    </source>
</reference>
<reference key="3">
    <citation type="journal article" date="2002" name="Genome Biol.">
        <title>Annotation of the Drosophila melanogaster euchromatic genome: a systematic review.</title>
        <authorList>
            <person name="Misra S."/>
            <person name="Crosby M.A."/>
            <person name="Mungall C.J."/>
            <person name="Matthews B.B."/>
            <person name="Campbell K.S."/>
            <person name="Hradecky P."/>
            <person name="Huang Y."/>
            <person name="Kaminker J.S."/>
            <person name="Millburn G.H."/>
            <person name="Prochnik S.E."/>
            <person name="Smith C.D."/>
            <person name="Tupy J.L."/>
            <person name="Whitfield E.J."/>
            <person name="Bayraktaroglu L."/>
            <person name="Berman B.P."/>
            <person name="Bettencourt B.R."/>
            <person name="Celniker S.E."/>
            <person name="de Grey A.D.N.J."/>
            <person name="Drysdale R.A."/>
            <person name="Harris N.L."/>
            <person name="Richter J."/>
            <person name="Russo S."/>
            <person name="Schroeder A.J."/>
            <person name="Shu S.Q."/>
            <person name="Stapleton M."/>
            <person name="Yamada C."/>
            <person name="Ashburner M."/>
            <person name="Gelbart W.M."/>
            <person name="Rubin G.M."/>
            <person name="Lewis S.E."/>
        </authorList>
    </citation>
    <scope>GENOME REANNOTATION</scope>
    <source>
        <strain>Berkeley</strain>
    </source>
</reference>
<reference key="4">
    <citation type="journal article" date="2002" name="Genome Biol.">
        <title>A Drosophila full-length cDNA resource.</title>
        <authorList>
            <person name="Stapleton M."/>
            <person name="Carlson J.W."/>
            <person name="Brokstein P."/>
            <person name="Yu C."/>
            <person name="Champe M."/>
            <person name="George R.A."/>
            <person name="Guarin H."/>
            <person name="Kronmiller B."/>
            <person name="Pacleb J.M."/>
            <person name="Park S."/>
            <person name="Wan K.H."/>
            <person name="Rubin G.M."/>
            <person name="Celniker S.E."/>
        </authorList>
    </citation>
    <scope>NUCLEOTIDE SEQUENCE [LARGE SCALE MRNA]</scope>
    <source>
        <strain>Berkeley</strain>
        <tissue>Embryo</tissue>
    </source>
</reference>
<reference key="5">
    <citation type="journal article" date="1989" name="Proc. Natl. Acad. Sci. U.S.A.">
        <title>Use of the DNA polymerase chain reaction for homology probing: isolation of partial cDNA or genomic clones encoding the iron-sulfur protein of succinate dehydrogenase from several species.</title>
        <authorList>
            <person name="Gould S.J."/>
            <person name="Subramani S."/>
            <person name="Scheffler I.E."/>
        </authorList>
    </citation>
    <scope>PRELIMINARY NUCLEOTIDE SEQUENCE OF 113-258</scope>
</reference>
<reference key="6">
    <citation type="journal article" date="1993" name="Proc. Natl. Acad. Sci. U.S.A.">
        <authorList>
            <person name="Gould S.J."/>
            <person name="Subramani S."/>
            <person name="Scheffler I.E."/>
        </authorList>
    </citation>
    <scope>ERRATUM OF PUBMED:2494655</scope>
</reference>
<protein>
    <recommendedName>
        <fullName>Succinate dehydrogenase [ubiquinone] iron-sulfur subunit, mitochondrial</fullName>
        <ecNumber>1.3.5.1</ecNumber>
    </recommendedName>
    <alternativeName>
        <fullName>Iron-sulfur subunit of complex II</fullName>
        <shortName>Ip</shortName>
    </alternativeName>
</protein>
<feature type="transit peptide" description="Mitochondrion" evidence="2">
    <location>
        <begin position="1"/>
        <end status="unknown"/>
    </location>
</feature>
<feature type="chain" id="PRO_0000010357" description="Succinate dehydrogenase [ubiquinone] iron-sulfur subunit, mitochondrial">
    <location>
        <begin status="unknown"/>
        <end position="297"/>
    </location>
</feature>
<feature type="domain" description="2Fe-2S ferredoxin-type" evidence="3">
    <location>
        <begin position="47"/>
        <end position="140"/>
    </location>
</feature>
<feature type="domain" description="4Fe-4S ferredoxin-type" evidence="4">
    <location>
        <begin position="185"/>
        <end position="215"/>
    </location>
</feature>
<feature type="binding site" evidence="1">
    <location>
        <position position="100"/>
    </location>
    <ligand>
        <name>[2Fe-2S] cluster</name>
        <dbReference type="ChEBI" id="CHEBI:190135"/>
    </ligand>
</feature>
<feature type="binding site" evidence="1">
    <location>
        <position position="105"/>
    </location>
    <ligand>
        <name>[2Fe-2S] cluster</name>
        <dbReference type="ChEBI" id="CHEBI:190135"/>
    </ligand>
</feature>
<feature type="binding site" evidence="1">
    <location>
        <position position="108"/>
    </location>
    <ligand>
        <name>[2Fe-2S] cluster</name>
        <dbReference type="ChEBI" id="CHEBI:190135"/>
    </ligand>
</feature>
<feature type="binding site" evidence="1">
    <location>
        <position position="120"/>
    </location>
    <ligand>
        <name>[2Fe-2S] cluster</name>
        <dbReference type="ChEBI" id="CHEBI:190135"/>
    </ligand>
</feature>
<feature type="binding site" evidence="1">
    <location>
        <position position="195"/>
    </location>
    <ligand>
        <name>[4Fe-4S] cluster</name>
        <dbReference type="ChEBI" id="CHEBI:49883"/>
    </ligand>
</feature>
<feature type="binding site" evidence="1">
    <location>
        <position position="198"/>
    </location>
    <ligand>
        <name>[4Fe-4S] cluster</name>
        <dbReference type="ChEBI" id="CHEBI:49883"/>
    </ligand>
</feature>
<feature type="binding site" evidence="1">
    <location>
        <position position="201"/>
    </location>
    <ligand>
        <name>[4Fe-4S] cluster</name>
        <dbReference type="ChEBI" id="CHEBI:49883"/>
    </ligand>
</feature>
<feature type="binding site" evidence="1">
    <location>
        <position position="205"/>
    </location>
    <ligand>
        <name>[3Fe-4S] cluster</name>
        <dbReference type="ChEBI" id="CHEBI:21137"/>
    </ligand>
</feature>
<feature type="binding site" evidence="1">
    <location>
        <position position="210"/>
    </location>
    <ligand>
        <name>a ubiquinone</name>
        <dbReference type="ChEBI" id="CHEBI:16389"/>
        <note>ligand shared with DHSD</note>
    </ligand>
</feature>
<feature type="binding site" evidence="1">
    <location>
        <position position="252"/>
    </location>
    <ligand>
        <name>[3Fe-4S] cluster</name>
        <dbReference type="ChEBI" id="CHEBI:21137"/>
    </ligand>
</feature>
<feature type="binding site" evidence="1">
    <location>
        <position position="258"/>
    </location>
    <ligand>
        <name>[3Fe-4S] cluster</name>
        <dbReference type="ChEBI" id="CHEBI:21137"/>
    </ligand>
</feature>
<feature type="binding site" evidence="1">
    <location>
        <position position="262"/>
    </location>
    <ligand>
        <name>[4Fe-4S] cluster</name>
        <dbReference type="ChEBI" id="CHEBI:49883"/>
    </ligand>
</feature>
<evidence type="ECO:0000250" key="1"/>
<evidence type="ECO:0000255" key="2"/>
<evidence type="ECO:0000255" key="3">
    <source>
        <dbReference type="PROSITE-ProRule" id="PRU00465"/>
    </source>
</evidence>
<evidence type="ECO:0000255" key="4">
    <source>
        <dbReference type="PROSITE-ProRule" id="PRU00711"/>
    </source>
</evidence>
<evidence type="ECO:0000269" key="5">
    <source>
    </source>
</evidence>
<evidence type="ECO:0000305" key="6"/>
<keyword id="KW-0001">2Fe-2S</keyword>
<keyword id="KW-0003">3Fe-4S</keyword>
<keyword id="KW-0004">4Fe-4S</keyword>
<keyword id="KW-0249">Electron transport</keyword>
<keyword id="KW-0408">Iron</keyword>
<keyword id="KW-0411">Iron-sulfur</keyword>
<keyword id="KW-0472">Membrane</keyword>
<keyword id="KW-0479">Metal-binding</keyword>
<keyword id="KW-0496">Mitochondrion</keyword>
<keyword id="KW-0999">Mitochondrion inner membrane</keyword>
<keyword id="KW-0560">Oxidoreductase</keyword>
<keyword id="KW-1185">Reference proteome</keyword>
<keyword id="KW-0809">Transit peptide</keyword>
<keyword id="KW-0813">Transport</keyword>
<keyword id="KW-0816">Tricarboxylic acid cycle</keyword>